<keyword id="KW-1185">Reference proteome</keyword>
<evidence type="ECO:0000255" key="1">
    <source>
        <dbReference type="HAMAP-Rule" id="MF_01526"/>
    </source>
</evidence>
<name>Y782_STRMU</name>
<sequence>MTVNVYDLANELERGIRALPEYQALVQAKAKIDEDEEAKKLWTEFTEFQMKIQGLIQTGQAPTPEVQTEMQSFNQKIEANPLLKEYATAQQALGVYVNDIERIIFSPLQDIAK</sequence>
<protein>
    <recommendedName>
        <fullName evidence="1">UPF0342 protein SMU_782</fullName>
    </recommendedName>
</protein>
<accession>Q8DUV9</accession>
<feature type="chain" id="PRO_0000109993" description="UPF0342 protein SMU_782">
    <location>
        <begin position="1"/>
        <end position="113"/>
    </location>
</feature>
<proteinExistence type="inferred from homology"/>
<dbReference type="EMBL" id="AE014133">
    <property type="protein sequence ID" value="AAN58502.1"/>
    <property type="molecule type" value="Genomic_DNA"/>
</dbReference>
<dbReference type="RefSeq" id="NP_721196.1">
    <property type="nucleotide sequence ID" value="NC_004350.2"/>
</dbReference>
<dbReference type="RefSeq" id="WP_002261936.1">
    <property type="nucleotide sequence ID" value="NC_004350.2"/>
</dbReference>
<dbReference type="SMR" id="Q8DUV9"/>
<dbReference type="STRING" id="210007.SMU_782"/>
<dbReference type="KEGG" id="smu:SMU_782"/>
<dbReference type="PATRIC" id="fig|210007.7.peg.693"/>
<dbReference type="eggNOG" id="COG3679">
    <property type="taxonomic scope" value="Bacteria"/>
</dbReference>
<dbReference type="HOGENOM" id="CLU_140243_2_0_9"/>
<dbReference type="OrthoDB" id="9811402at2"/>
<dbReference type="PhylomeDB" id="Q8DUV9"/>
<dbReference type="Proteomes" id="UP000002512">
    <property type="component" value="Chromosome"/>
</dbReference>
<dbReference type="Gene3D" id="1.20.1500.10">
    <property type="entry name" value="YheA/YmcA-like"/>
    <property type="match status" value="1"/>
</dbReference>
<dbReference type="HAMAP" id="MF_01526">
    <property type="entry name" value="UPF0342"/>
    <property type="match status" value="1"/>
</dbReference>
<dbReference type="InterPro" id="IPR010368">
    <property type="entry name" value="Com_YlbF"/>
</dbReference>
<dbReference type="InterPro" id="IPR023378">
    <property type="entry name" value="YheA/YmcA-like_dom_sf"/>
</dbReference>
<dbReference type="NCBIfam" id="NF010209">
    <property type="entry name" value="PRK13676.1-1"/>
    <property type="match status" value="1"/>
</dbReference>
<dbReference type="Pfam" id="PF06133">
    <property type="entry name" value="Com_YlbF"/>
    <property type="match status" value="1"/>
</dbReference>
<dbReference type="SUPFAM" id="SSF158622">
    <property type="entry name" value="YheA/YmcA-like"/>
    <property type="match status" value="1"/>
</dbReference>
<comment type="similarity">
    <text evidence="1">Belongs to the UPF0342 family.</text>
</comment>
<gene>
    <name type="ordered locus">SMU_782</name>
</gene>
<reference key="1">
    <citation type="journal article" date="2002" name="Proc. Natl. Acad. Sci. U.S.A.">
        <title>Genome sequence of Streptococcus mutans UA159, a cariogenic dental pathogen.</title>
        <authorList>
            <person name="Ajdic D.J."/>
            <person name="McShan W.M."/>
            <person name="McLaughlin R.E."/>
            <person name="Savic G."/>
            <person name="Chang J."/>
            <person name="Carson M.B."/>
            <person name="Primeaux C."/>
            <person name="Tian R."/>
            <person name="Kenton S."/>
            <person name="Jia H.G."/>
            <person name="Lin S.P."/>
            <person name="Qian Y."/>
            <person name="Li S."/>
            <person name="Zhu H."/>
            <person name="Najar F.Z."/>
            <person name="Lai H."/>
            <person name="White J."/>
            <person name="Roe B.A."/>
            <person name="Ferretti J.J."/>
        </authorList>
    </citation>
    <scope>NUCLEOTIDE SEQUENCE [LARGE SCALE GENOMIC DNA]</scope>
    <source>
        <strain>ATCC 700610 / UA159</strain>
    </source>
</reference>
<organism>
    <name type="scientific">Streptococcus mutans serotype c (strain ATCC 700610 / UA159)</name>
    <dbReference type="NCBI Taxonomy" id="210007"/>
    <lineage>
        <taxon>Bacteria</taxon>
        <taxon>Bacillati</taxon>
        <taxon>Bacillota</taxon>
        <taxon>Bacilli</taxon>
        <taxon>Lactobacillales</taxon>
        <taxon>Streptococcaceae</taxon>
        <taxon>Streptococcus</taxon>
    </lineage>
</organism>